<organism>
    <name type="scientific">Rickettsia peacockii (strain Rustic)</name>
    <dbReference type="NCBI Taxonomy" id="562019"/>
    <lineage>
        <taxon>Bacteria</taxon>
        <taxon>Pseudomonadati</taxon>
        <taxon>Pseudomonadota</taxon>
        <taxon>Alphaproteobacteria</taxon>
        <taxon>Rickettsiales</taxon>
        <taxon>Rickettsiaceae</taxon>
        <taxon>Rickettsieae</taxon>
        <taxon>Rickettsia</taxon>
        <taxon>spotted fever group</taxon>
    </lineage>
</organism>
<proteinExistence type="inferred from homology"/>
<dbReference type="EC" id="6.1.1.20" evidence="1"/>
<dbReference type="EMBL" id="CP001227">
    <property type="protein sequence ID" value="ACR47698.1"/>
    <property type="molecule type" value="Genomic_DNA"/>
</dbReference>
<dbReference type="RefSeq" id="WP_010977215.1">
    <property type="nucleotide sequence ID" value="NC_012730.1"/>
</dbReference>
<dbReference type="SMR" id="C4K2A1"/>
<dbReference type="GeneID" id="928775"/>
<dbReference type="KEGG" id="rpk:RPR_05625"/>
<dbReference type="HOGENOM" id="CLU_025086_0_1_5"/>
<dbReference type="Proteomes" id="UP000005015">
    <property type="component" value="Chromosome"/>
</dbReference>
<dbReference type="GO" id="GO:0005737">
    <property type="term" value="C:cytoplasm"/>
    <property type="evidence" value="ECO:0007669"/>
    <property type="project" value="UniProtKB-SubCell"/>
</dbReference>
<dbReference type="GO" id="GO:0005524">
    <property type="term" value="F:ATP binding"/>
    <property type="evidence" value="ECO:0007669"/>
    <property type="project" value="UniProtKB-UniRule"/>
</dbReference>
<dbReference type="GO" id="GO:0000287">
    <property type="term" value="F:magnesium ion binding"/>
    <property type="evidence" value="ECO:0007669"/>
    <property type="project" value="UniProtKB-UniRule"/>
</dbReference>
<dbReference type="GO" id="GO:0004826">
    <property type="term" value="F:phenylalanine-tRNA ligase activity"/>
    <property type="evidence" value="ECO:0007669"/>
    <property type="project" value="UniProtKB-UniRule"/>
</dbReference>
<dbReference type="GO" id="GO:0000049">
    <property type="term" value="F:tRNA binding"/>
    <property type="evidence" value="ECO:0007669"/>
    <property type="project" value="InterPro"/>
</dbReference>
<dbReference type="GO" id="GO:0006432">
    <property type="term" value="P:phenylalanyl-tRNA aminoacylation"/>
    <property type="evidence" value="ECO:0007669"/>
    <property type="project" value="UniProtKB-UniRule"/>
</dbReference>
<dbReference type="CDD" id="cd00496">
    <property type="entry name" value="PheRS_alpha_core"/>
    <property type="match status" value="1"/>
</dbReference>
<dbReference type="FunFam" id="3.30.930.10:FF:000003">
    <property type="entry name" value="Phenylalanine--tRNA ligase alpha subunit"/>
    <property type="match status" value="1"/>
</dbReference>
<dbReference type="Gene3D" id="3.30.930.10">
    <property type="entry name" value="Bira Bifunctional Protein, Domain 2"/>
    <property type="match status" value="1"/>
</dbReference>
<dbReference type="HAMAP" id="MF_00281">
    <property type="entry name" value="Phe_tRNA_synth_alpha1"/>
    <property type="match status" value="1"/>
</dbReference>
<dbReference type="InterPro" id="IPR006195">
    <property type="entry name" value="aa-tRNA-synth_II"/>
</dbReference>
<dbReference type="InterPro" id="IPR045864">
    <property type="entry name" value="aa-tRNA-synth_II/BPL/LPL"/>
</dbReference>
<dbReference type="InterPro" id="IPR004529">
    <property type="entry name" value="Phe-tRNA-synth_IIc_asu"/>
</dbReference>
<dbReference type="InterPro" id="IPR004188">
    <property type="entry name" value="Phe-tRNA_ligase_II_N"/>
</dbReference>
<dbReference type="InterPro" id="IPR022911">
    <property type="entry name" value="Phe_tRNA_ligase_alpha1_bac"/>
</dbReference>
<dbReference type="InterPro" id="IPR002319">
    <property type="entry name" value="Phenylalanyl-tRNA_Synthase"/>
</dbReference>
<dbReference type="InterPro" id="IPR010978">
    <property type="entry name" value="tRNA-bd_arm"/>
</dbReference>
<dbReference type="NCBIfam" id="TIGR00468">
    <property type="entry name" value="pheS"/>
    <property type="match status" value="1"/>
</dbReference>
<dbReference type="PANTHER" id="PTHR11538:SF41">
    <property type="entry name" value="PHENYLALANINE--TRNA LIGASE, MITOCHONDRIAL"/>
    <property type="match status" value="1"/>
</dbReference>
<dbReference type="PANTHER" id="PTHR11538">
    <property type="entry name" value="PHENYLALANYL-TRNA SYNTHETASE"/>
    <property type="match status" value="1"/>
</dbReference>
<dbReference type="Pfam" id="PF02912">
    <property type="entry name" value="Phe_tRNA-synt_N"/>
    <property type="match status" value="1"/>
</dbReference>
<dbReference type="Pfam" id="PF01409">
    <property type="entry name" value="tRNA-synt_2d"/>
    <property type="match status" value="1"/>
</dbReference>
<dbReference type="SUPFAM" id="SSF55681">
    <property type="entry name" value="Class II aaRS and biotin synthetases"/>
    <property type="match status" value="1"/>
</dbReference>
<dbReference type="SUPFAM" id="SSF46589">
    <property type="entry name" value="tRNA-binding arm"/>
    <property type="match status" value="1"/>
</dbReference>
<dbReference type="PROSITE" id="PS50862">
    <property type="entry name" value="AA_TRNA_LIGASE_II"/>
    <property type="match status" value="1"/>
</dbReference>
<evidence type="ECO:0000255" key="1">
    <source>
        <dbReference type="HAMAP-Rule" id="MF_00281"/>
    </source>
</evidence>
<protein>
    <recommendedName>
        <fullName evidence="1">Phenylalanine--tRNA ligase alpha subunit</fullName>
        <ecNumber evidence="1">6.1.1.20</ecNumber>
    </recommendedName>
    <alternativeName>
        <fullName evidence="1">Phenylalanyl-tRNA synthetase alpha subunit</fullName>
        <shortName evidence="1">PheRS</shortName>
    </alternativeName>
</protein>
<feature type="chain" id="PRO_1000204835" description="Phenylalanine--tRNA ligase alpha subunit">
    <location>
        <begin position="1"/>
        <end position="349"/>
    </location>
</feature>
<feature type="binding site" evidence="1">
    <location>
        <position position="258"/>
    </location>
    <ligand>
        <name>Mg(2+)</name>
        <dbReference type="ChEBI" id="CHEBI:18420"/>
        <note>shared with beta subunit</note>
    </ligand>
</feature>
<name>SYFA_RICPU</name>
<keyword id="KW-0030">Aminoacyl-tRNA synthetase</keyword>
<keyword id="KW-0067">ATP-binding</keyword>
<keyword id="KW-0963">Cytoplasm</keyword>
<keyword id="KW-0436">Ligase</keyword>
<keyword id="KW-0460">Magnesium</keyword>
<keyword id="KW-0479">Metal-binding</keyword>
<keyword id="KW-0547">Nucleotide-binding</keyword>
<keyword id="KW-0648">Protein biosynthesis</keyword>
<reference key="1">
    <citation type="journal article" date="2009" name="PLoS ONE">
        <title>Genome sequence of the endosymbiont Rickettsia peacockii and comparison with virulent Rickettsia rickettsii: identification of virulence factors.</title>
        <authorList>
            <person name="Felsheim R.F."/>
            <person name="Kurtti T.J."/>
            <person name="Munderloh U.G."/>
        </authorList>
    </citation>
    <scope>NUCLEOTIDE SEQUENCE [LARGE SCALE GENOMIC DNA]</scope>
    <source>
        <strain>Rustic</strain>
    </source>
</reference>
<comment type="catalytic activity">
    <reaction evidence="1">
        <text>tRNA(Phe) + L-phenylalanine + ATP = L-phenylalanyl-tRNA(Phe) + AMP + diphosphate + H(+)</text>
        <dbReference type="Rhea" id="RHEA:19413"/>
        <dbReference type="Rhea" id="RHEA-COMP:9668"/>
        <dbReference type="Rhea" id="RHEA-COMP:9699"/>
        <dbReference type="ChEBI" id="CHEBI:15378"/>
        <dbReference type="ChEBI" id="CHEBI:30616"/>
        <dbReference type="ChEBI" id="CHEBI:33019"/>
        <dbReference type="ChEBI" id="CHEBI:58095"/>
        <dbReference type="ChEBI" id="CHEBI:78442"/>
        <dbReference type="ChEBI" id="CHEBI:78531"/>
        <dbReference type="ChEBI" id="CHEBI:456215"/>
        <dbReference type="EC" id="6.1.1.20"/>
    </reaction>
</comment>
<comment type="cofactor">
    <cofactor evidence="1">
        <name>Mg(2+)</name>
        <dbReference type="ChEBI" id="CHEBI:18420"/>
    </cofactor>
    <text evidence="1">Binds 2 magnesium ions per tetramer.</text>
</comment>
<comment type="subunit">
    <text evidence="1">Tetramer of two alpha and two beta subunits.</text>
</comment>
<comment type="subcellular location">
    <subcellularLocation>
        <location evidence="1">Cytoplasm</location>
    </subcellularLocation>
</comment>
<comment type="similarity">
    <text evidence="1">Belongs to the class-II aminoacyl-tRNA synthetase family. Phe-tRNA synthetase alpha subunit type 1 subfamily.</text>
</comment>
<gene>
    <name evidence="1" type="primary">pheS</name>
    <name type="ordered locus">RPR_05625</name>
</gene>
<accession>C4K2A1</accession>
<sequence>MENIETILRLAEDKILLVQNLKALQEYKVEFLGKNGIVTGELKKLGSLNEQERKEFGLKINKLKDKIQNIIKAKAEILEEQELNFKLAADKIDLTIPARRYKQGSIHPITQCSEELIQVFSQFGFTIENGPNIENDFHNFTALNFEDDHPARQMHDTFYLKSQENNKPLLLRTHTSTVQIRAMKNGKPPFRFIAPGRTYRSDSDMTHTPMFHQIEGLVMDKNINMGHLKYVITTFIKSFFENSNIELRFRPSFFPFTEPSAEVDIRMNKNDKWLEVLGCGMVHPNVLKNVGIDSSEYQGFAFGLGVERFAMLKYNIKDLRQFFEGDMRWLKHYNFGSFDIPNLAGGLTK</sequence>